<feature type="chain" id="PRO_1000077659" description="GTPase Der">
    <location>
        <begin position="1"/>
        <end position="465"/>
    </location>
</feature>
<feature type="domain" description="EngA-type G 1">
    <location>
        <begin position="3"/>
        <end position="166"/>
    </location>
</feature>
<feature type="domain" description="EngA-type G 2">
    <location>
        <begin position="184"/>
        <end position="358"/>
    </location>
</feature>
<feature type="domain" description="KH-like" evidence="1">
    <location>
        <begin position="359"/>
        <end position="443"/>
    </location>
</feature>
<feature type="binding site" evidence="1">
    <location>
        <begin position="9"/>
        <end position="16"/>
    </location>
    <ligand>
        <name>GTP</name>
        <dbReference type="ChEBI" id="CHEBI:37565"/>
        <label>1</label>
    </ligand>
</feature>
<feature type="binding site" evidence="1">
    <location>
        <begin position="56"/>
        <end position="60"/>
    </location>
    <ligand>
        <name>GTP</name>
        <dbReference type="ChEBI" id="CHEBI:37565"/>
        <label>1</label>
    </ligand>
</feature>
<feature type="binding site" evidence="1">
    <location>
        <begin position="118"/>
        <end position="121"/>
    </location>
    <ligand>
        <name>GTP</name>
        <dbReference type="ChEBI" id="CHEBI:37565"/>
        <label>1</label>
    </ligand>
</feature>
<feature type="binding site" evidence="1">
    <location>
        <begin position="190"/>
        <end position="197"/>
    </location>
    <ligand>
        <name>GTP</name>
        <dbReference type="ChEBI" id="CHEBI:37565"/>
        <label>2</label>
    </ligand>
</feature>
<feature type="binding site" evidence="1">
    <location>
        <begin position="237"/>
        <end position="241"/>
    </location>
    <ligand>
        <name>GTP</name>
        <dbReference type="ChEBI" id="CHEBI:37565"/>
        <label>2</label>
    </ligand>
</feature>
<feature type="binding site" evidence="1">
    <location>
        <begin position="302"/>
        <end position="305"/>
    </location>
    <ligand>
        <name>GTP</name>
        <dbReference type="ChEBI" id="CHEBI:37565"/>
        <label>2</label>
    </ligand>
</feature>
<reference key="1">
    <citation type="submission" date="2007-12" db="EMBL/GenBank/DDBJ databases">
        <title>Complete sequence of chromosome of Francisella philomiragia subsp. philomiragia ATCC 25017.</title>
        <authorList>
            <consortium name="US DOE Joint Genome Institute"/>
            <person name="Copeland A."/>
            <person name="Lucas S."/>
            <person name="Lapidus A."/>
            <person name="Barry K."/>
            <person name="Detter J.C."/>
            <person name="Glavina del Rio T."/>
            <person name="Hammon N."/>
            <person name="Israni S."/>
            <person name="Dalin E."/>
            <person name="Tice H."/>
            <person name="Pitluck S."/>
            <person name="Chain P."/>
            <person name="Malfatti S."/>
            <person name="Shin M."/>
            <person name="Vergez L."/>
            <person name="Schmutz J."/>
            <person name="Larimer F."/>
            <person name="Land M."/>
            <person name="Hauser L."/>
            <person name="Richardson P."/>
        </authorList>
    </citation>
    <scope>NUCLEOTIDE SEQUENCE [LARGE SCALE GENOMIC DNA]</scope>
    <source>
        <strain>ATCC 25017 / CCUG 19701 / FSC 153 / O#319-036</strain>
    </source>
</reference>
<organism>
    <name type="scientific">Francisella philomiragia subsp. philomiragia (strain ATCC 25017 / CCUG 19701 / FSC 153 / O#319-036)</name>
    <dbReference type="NCBI Taxonomy" id="484022"/>
    <lineage>
        <taxon>Bacteria</taxon>
        <taxon>Pseudomonadati</taxon>
        <taxon>Pseudomonadota</taxon>
        <taxon>Gammaproteobacteria</taxon>
        <taxon>Thiotrichales</taxon>
        <taxon>Francisellaceae</taxon>
        <taxon>Francisella</taxon>
    </lineage>
</organism>
<keyword id="KW-0342">GTP-binding</keyword>
<keyword id="KW-0547">Nucleotide-binding</keyword>
<keyword id="KW-0677">Repeat</keyword>
<keyword id="KW-0690">Ribosome biogenesis</keyword>
<comment type="function">
    <text evidence="1">GTPase that plays an essential role in the late steps of ribosome biogenesis.</text>
</comment>
<comment type="subunit">
    <text evidence="1">Associates with the 50S ribosomal subunit.</text>
</comment>
<comment type="similarity">
    <text evidence="1">Belongs to the TRAFAC class TrmE-Era-EngA-EngB-Septin-like GTPase superfamily. EngA (Der) GTPase family.</text>
</comment>
<evidence type="ECO:0000255" key="1">
    <source>
        <dbReference type="HAMAP-Rule" id="MF_00195"/>
    </source>
</evidence>
<name>DER_FRAP2</name>
<gene>
    <name evidence="1" type="primary">der</name>
    <name type="synonym">engA</name>
    <name type="ordered locus">Fphi_0391</name>
</gene>
<sequence length="465" mass="52563">MSFLVAIVGRANVGKSTLFNVLTNSRDALVFDFEGVTRDRQYGQAKYDDLGYLVVDTGGISDQDAGFDEFMAKQSQMAIDEANLVFFVVDGRSGLTSGDEYVANLLRQKDKRVVVVVNKVDGVEEESAMAEFYELGFDKVFAVSAAHRRNTQKLLDKFLKKPLNEFYRDYTQTQEHKEQQRHGIHFSLIGRPNVGKSTLTNRMLGEDRVVVFDMPGTTIDSVSIPFERHGHKYTIVDTAGVRRRGKVKQTLEKFSVIKTLQAIQDSNVVVAVVDAREGISDQDLSLIHFAIKNGRALVLAINKWDGMTEEDRNLVKQDLKRKLFFLEDYVDVHFISALHGTNVGHVFESIDTAYACANKKITTADATRLMQLAVEAHSPPMVGKFRIKLKYAHVGGHNPPVIVIHGNQVNRLPNSYKRYLENFFREALDFRGTPIVFEFKQSENPFADRKNKRIKDEGSKSKKTK</sequence>
<proteinExistence type="inferred from homology"/>
<dbReference type="EMBL" id="CP000937">
    <property type="protein sequence ID" value="ABZ86609.1"/>
    <property type="molecule type" value="Genomic_DNA"/>
</dbReference>
<dbReference type="SMR" id="B0TZQ0"/>
<dbReference type="KEGG" id="fph:Fphi_0391"/>
<dbReference type="eggNOG" id="COG1160">
    <property type="taxonomic scope" value="Bacteria"/>
</dbReference>
<dbReference type="HOGENOM" id="CLU_016077_6_2_6"/>
<dbReference type="GO" id="GO:0005525">
    <property type="term" value="F:GTP binding"/>
    <property type="evidence" value="ECO:0007669"/>
    <property type="project" value="UniProtKB-UniRule"/>
</dbReference>
<dbReference type="GO" id="GO:0043022">
    <property type="term" value="F:ribosome binding"/>
    <property type="evidence" value="ECO:0007669"/>
    <property type="project" value="TreeGrafter"/>
</dbReference>
<dbReference type="GO" id="GO:0042254">
    <property type="term" value="P:ribosome biogenesis"/>
    <property type="evidence" value="ECO:0007669"/>
    <property type="project" value="UniProtKB-KW"/>
</dbReference>
<dbReference type="CDD" id="cd01894">
    <property type="entry name" value="EngA1"/>
    <property type="match status" value="1"/>
</dbReference>
<dbReference type="CDD" id="cd01895">
    <property type="entry name" value="EngA2"/>
    <property type="match status" value="1"/>
</dbReference>
<dbReference type="FunFam" id="3.30.300.20:FF:000004">
    <property type="entry name" value="GTPase Der"/>
    <property type="match status" value="1"/>
</dbReference>
<dbReference type="FunFam" id="3.40.50.300:FF:000040">
    <property type="entry name" value="GTPase Der"/>
    <property type="match status" value="1"/>
</dbReference>
<dbReference type="FunFam" id="3.40.50.300:FF:000057">
    <property type="entry name" value="GTPase Der"/>
    <property type="match status" value="1"/>
</dbReference>
<dbReference type="Gene3D" id="3.30.300.20">
    <property type="match status" value="1"/>
</dbReference>
<dbReference type="Gene3D" id="3.40.50.300">
    <property type="entry name" value="P-loop containing nucleotide triphosphate hydrolases"/>
    <property type="match status" value="2"/>
</dbReference>
<dbReference type="HAMAP" id="MF_00195">
    <property type="entry name" value="GTPase_Der"/>
    <property type="match status" value="1"/>
</dbReference>
<dbReference type="InterPro" id="IPR031166">
    <property type="entry name" value="G_ENGA"/>
</dbReference>
<dbReference type="InterPro" id="IPR006073">
    <property type="entry name" value="GTP-bd"/>
</dbReference>
<dbReference type="InterPro" id="IPR016484">
    <property type="entry name" value="GTPase_Der"/>
</dbReference>
<dbReference type="InterPro" id="IPR032859">
    <property type="entry name" value="KH_dom-like"/>
</dbReference>
<dbReference type="InterPro" id="IPR015946">
    <property type="entry name" value="KH_dom-like_a/b"/>
</dbReference>
<dbReference type="InterPro" id="IPR027417">
    <property type="entry name" value="P-loop_NTPase"/>
</dbReference>
<dbReference type="InterPro" id="IPR005225">
    <property type="entry name" value="Small_GTP-bd"/>
</dbReference>
<dbReference type="NCBIfam" id="TIGR03594">
    <property type="entry name" value="GTPase_EngA"/>
    <property type="match status" value="1"/>
</dbReference>
<dbReference type="NCBIfam" id="TIGR00231">
    <property type="entry name" value="small_GTP"/>
    <property type="match status" value="2"/>
</dbReference>
<dbReference type="PANTHER" id="PTHR43834">
    <property type="entry name" value="GTPASE DER"/>
    <property type="match status" value="1"/>
</dbReference>
<dbReference type="PANTHER" id="PTHR43834:SF6">
    <property type="entry name" value="GTPASE DER"/>
    <property type="match status" value="1"/>
</dbReference>
<dbReference type="Pfam" id="PF14714">
    <property type="entry name" value="KH_dom-like"/>
    <property type="match status" value="1"/>
</dbReference>
<dbReference type="Pfam" id="PF01926">
    <property type="entry name" value="MMR_HSR1"/>
    <property type="match status" value="2"/>
</dbReference>
<dbReference type="PIRSF" id="PIRSF006485">
    <property type="entry name" value="GTP-binding_EngA"/>
    <property type="match status" value="1"/>
</dbReference>
<dbReference type="PRINTS" id="PR00326">
    <property type="entry name" value="GTP1OBG"/>
</dbReference>
<dbReference type="SUPFAM" id="SSF52540">
    <property type="entry name" value="P-loop containing nucleoside triphosphate hydrolases"/>
    <property type="match status" value="2"/>
</dbReference>
<dbReference type="PROSITE" id="PS51712">
    <property type="entry name" value="G_ENGA"/>
    <property type="match status" value="2"/>
</dbReference>
<accession>B0TZQ0</accession>
<protein>
    <recommendedName>
        <fullName evidence="1">GTPase Der</fullName>
    </recommendedName>
    <alternativeName>
        <fullName evidence="1">GTP-binding protein EngA</fullName>
    </alternativeName>
</protein>